<evidence type="ECO:0000255" key="1">
    <source>
        <dbReference type="HAMAP-Rule" id="MF_01445"/>
    </source>
</evidence>
<protein>
    <recommendedName>
        <fullName evidence="1">tRNA N6-adenosine threonylcarbamoyltransferase</fullName>
        <ecNumber evidence="1">2.3.1.234</ecNumber>
    </recommendedName>
    <alternativeName>
        <fullName evidence="1">N6-L-threonylcarbamoyladenine synthase</fullName>
        <shortName evidence="1">t(6)A synthase</shortName>
    </alternativeName>
    <alternativeName>
        <fullName evidence="1">t(6)A37 threonylcarbamoyladenosine biosynthesis protein TsaD</fullName>
    </alternativeName>
    <alternativeName>
        <fullName evidence="1">tRNA threonylcarbamoyladenosine biosynthesis protein TsaD</fullName>
    </alternativeName>
</protein>
<accession>Q8DRH2</accession>
<reference key="1">
    <citation type="journal article" date="2001" name="J. Bacteriol.">
        <title>Genome of the bacterium Streptococcus pneumoniae strain R6.</title>
        <authorList>
            <person name="Hoskins J."/>
            <person name="Alborn W.E. Jr."/>
            <person name="Arnold J."/>
            <person name="Blaszczak L.C."/>
            <person name="Burgett S."/>
            <person name="DeHoff B.S."/>
            <person name="Estrem S.T."/>
            <person name="Fritz L."/>
            <person name="Fu D.-J."/>
            <person name="Fuller W."/>
            <person name="Geringer C."/>
            <person name="Gilmour R."/>
            <person name="Glass J.S."/>
            <person name="Khoja H."/>
            <person name="Kraft A.R."/>
            <person name="Lagace R.E."/>
            <person name="LeBlanc D.J."/>
            <person name="Lee L.N."/>
            <person name="Lefkowitz E.J."/>
            <person name="Lu J."/>
            <person name="Matsushima P."/>
            <person name="McAhren S.M."/>
            <person name="McHenney M."/>
            <person name="McLeaster K."/>
            <person name="Mundy C.W."/>
            <person name="Nicas T.I."/>
            <person name="Norris F.H."/>
            <person name="O'Gara M."/>
            <person name="Peery R.B."/>
            <person name="Robertson G.T."/>
            <person name="Rockey P."/>
            <person name="Sun P.-M."/>
            <person name="Winkler M.E."/>
            <person name="Yang Y."/>
            <person name="Young-Bellido M."/>
            <person name="Zhao G."/>
            <person name="Zook C.A."/>
            <person name="Baltz R.H."/>
            <person name="Jaskunas S.R."/>
            <person name="Rosteck P.R. Jr."/>
            <person name="Skatrud P.L."/>
            <person name="Glass J.I."/>
        </authorList>
    </citation>
    <scope>NUCLEOTIDE SEQUENCE [LARGE SCALE GENOMIC DNA]</scope>
    <source>
        <strain>ATCC BAA-255 / R6</strain>
    </source>
</reference>
<keyword id="KW-0012">Acyltransferase</keyword>
<keyword id="KW-0963">Cytoplasm</keyword>
<keyword id="KW-0408">Iron</keyword>
<keyword id="KW-0479">Metal-binding</keyword>
<keyword id="KW-1185">Reference proteome</keyword>
<keyword id="KW-0808">Transferase</keyword>
<keyword id="KW-0819">tRNA processing</keyword>
<name>TSAD_STRR6</name>
<feature type="chain" id="PRO_0000303562" description="tRNA N6-adenosine threonylcarbamoyltransferase">
    <location>
        <begin position="1"/>
        <end position="336"/>
    </location>
</feature>
<feature type="binding site" evidence="1">
    <location>
        <position position="114"/>
    </location>
    <ligand>
        <name>Fe cation</name>
        <dbReference type="ChEBI" id="CHEBI:24875"/>
    </ligand>
</feature>
<feature type="binding site" evidence="1">
    <location>
        <position position="118"/>
    </location>
    <ligand>
        <name>Fe cation</name>
        <dbReference type="ChEBI" id="CHEBI:24875"/>
    </ligand>
</feature>
<feature type="binding site" evidence="1">
    <location>
        <begin position="136"/>
        <end position="140"/>
    </location>
    <ligand>
        <name>substrate</name>
    </ligand>
</feature>
<feature type="binding site" evidence="1">
    <location>
        <position position="169"/>
    </location>
    <ligand>
        <name>substrate</name>
    </ligand>
</feature>
<feature type="binding site" evidence="1">
    <location>
        <position position="182"/>
    </location>
    <ligand>
        <name>substrate</name>
    </ligand>
</feature>
<feature type="binding site" evidence="1">
    <location>
        <position position="186"/>
    </location>
    <ligand>
        <name>substrate</name>
    </ligand>
</feature>
<feature type="binding site" evidence="1">
    <location>
        <position position="275"/>
    </location>
    <ligand>
        <name>substrate</name>
    </ligand>
</feature>
<feature type="binding site" evidence="1">
    <location>
        <position position="301"/>
    </location>
    <ligand>
        <name>Fe cation</name>
        <dbReference type="ChEBI" id="CHEBI:24875"/>
    </ligand>
</feature>
<sequence>MKDRYILAFETSCDETSVAVLKNDDELLSNVIASQIESHKRFGGVVPEVASRHHVEVITACIEEALAEAGITEEDVTAVAVTYGPGLVGALLVGLSAAKAFAWAHGLPLIPVNHMAGHLMAAQSVEPLEFPLLALLVSGGHTELVYVSEAGDYKIVGETRDDAVGEAYDKVGRVMGLTYPAGREIDELAHQGQDIYDFPRAMIKEDNLEFSFSGLKSAFINLHHNAEQKGESLSTEDLCASFQAAVMDILMAKTKKALEKYPVKTLVVAGGVAANKGLRERLATEITDVNVIIPPLRLCGDNAGMIAYASVSEWNKENFANLDLNAKPSLAFDTME</sequence>
<organism>
    <name type="scientific">Streptococcus pneumoniae (strain ATCC BAA-255 / R6)</name>
    <dbReference type="NCBI Taxonomy" id="171101"/>
    <lineage>
        <taxon>Bacteria</taxon>
        <taxon>Bacillati</taxon>
        <taxon>Bacillota</taxon>
        <taxon>Bacilli</taxon>
        <taxon>Lactobacillales</taxon>
        <taxon>Streptococcaceae</taxon>
        <taxon>Streptococcus</taxon>
    </lineage>
</organism>
<proteinExistence type="inferred from homology"/>
<comment type="function">
    <text evidence="1">Required for the formation of a threonylcarbamoyl group on adenosine at position 37 (t(6)A37) in tRNAs that read codons beginning with adenine. Is involved in the transfer of the threonylcarbamoyl moiety of threonylcarbamoyl-AMP (TC-AMP) to the N6 group of A37, together with TsaE and TsaB. TsaD likely plays a direct catalytic role in this reaction.</text>
</comment>
<comment type="catalytic activity">
    <reaction evidence="1">
        <text>L-threonylcarbamoyladenylate + adenosine(37) in tRNA = N(6)-L-threonylcarbamoyladenosine(37) in tRNA + AMP + H(+)</text>
        <dbReference type="Rhea" id="RHEA:37059"/>
        <dbReference type="Rhea" id="RHEA-COMP:10162"/>
        <dbReference type="Rhea" id="RHEA-COMP:10163"/>
        <dbReference type="ChEBI" id="CHEBI:15378"/>
        <dbReference type="ChEBI" id="CHEBI:73682"/>
        <dbReference type="ChEBI" id="CHEBI:74411"/>
        <dbReference type="ChEBI" id="CHEBI:74418"/>
        <dbReference type="ChEBI" id="CHEBI:456215"/>
        <dbReference type="EC" id="2.3.1.234"/>
    </reaction>
</comment>
<comment type="cofactor">
    <cofactor evidence="1">
        <name>Fe(2+)</name>
        <dbReference type="ChEBI" id="CHEBI:29033"/>
    </cofactor>
    <text evidence="1">Binds 1 Fe(2+) ion per subunit.</text>
</comment>
<comment type="subcellular location">
    <subcellularLocation>
        <location evidence="1">Cytoplasm</location>
    </subcellularLocation>
</comment>
<comment type="similarity">
    <text evidence="1">Belongs to the KAE1 / TsaD family.</text>
</comment>
<gene>
    <name evidence="1" type="primary">tsaD</name>
    <name type="synonym">gcp</name>
    <name type="ordered locus">spr0131</name>
</gene>
<dbReference type="EC" id="2.3.1.234" evidence="1"/>
<dbReference type="EMBL" id="AE007317">
    <property type="protein sequence ID" value="AAK98935.1"/>
    <property type="molecule type" value="Genomic_DNA"/>
</dbReference>
<dbReference type="PIR" id="C97888">
    <property type="entry name" value="C97888"/>
</dbReference>
<dbReference type="RefSeq" id="NP_357725.1">
    <property type="nucleotide sequence ID" value="NC_003098.1"/>
</dbReference>
<dbReference type="RefSeq" id="WP_000655051.1">
    <property type="nucleotide sequence ID" value="NC_003098.1"/>
</dbReference>
<dbReference type="SMR" id="Q8DRH2"/>
<dbReference type="STRING" id="171101.spr0131"/>
<dbReference type="DNASU" id="934879"/>
<dbReference type="KEGG" id="spr:spr0131"/>
<dbReference type="PATRIC" id="fig|171101.6.peg.153"/>
<dbReference type="eggNOG" id="COG0533">
    <property type="taxonomic scope" value="Bacteria"/>
</dbReference>
<dbReference type="HOGENOM" id="CLU_023208_0_2_9"/>
<dbReference type="Proteomes" id="UP000000586">
    <property type="component" value="Chromosome"/>
</dbReference>
<dbReference type="GO" id="GO:0005737">
    <property type="term" value="C:cytoplasm"/>
    <property type="evidence" value="ECO:0007669"/>
    <property type="project" value="UniProtKB-SubCell"/>
</dbReference>
<dbReference type="GO" id="GO:0005506">
    <property type="term" value="F:iron ion binding"/>
    <property type="evidence" value="ECO:0007669"/>
    <property type="project" value="UniProtKB-UniRule"/>
</dbReference>
<dbReference type="GO" id="GO:0061711">
    <property type="term" value="F:N(6)-L-threonylcarbamoyladenine synthase activity"/>
    <property type="evidence" value="ECO:0007669"/>
    <property type="project" value="UniProtKB-EC"/>
</dbReference>
<dbReference type="GO" id="GO:0002949">
    <property type="term" value="P:tRNA threonylcarbamoyladenosine modification"/>
    <property type="evidence" value="ECO:0007669"/>
    <property type="project" value="UniProtKB-UniRule"/>
</dbReference>
<dbReference type="CDD" id="cd24133">
    <property type="entry name" value="ASKHA_NBD_TsaD_bac"/>
    <property type="match status" value="1"/>
</dbReference>
<dbReference type="FunFam" id="3.30.420.40:FF:000012">
    <property type="entry name" value="tRNA N6-adenosine threonylcarbamoyltransferase"/>
    <property type="match status" value="1"/>
</dbReference>
<dbReference type="FunFam" id="3.30.420.40:FF:000040">
    <property type="entry name" value="tRNA N6-adenosine threonylcarbamoyltransferase"/>
    <property type="match status" value="1"/>
</dbReference>
<dbReference type="Gene3D" id="3.30.420.40">
    <property type="match status" value="2"/>
</dbReference>
<dbReference type="HAMAP" id="MF_01445">
    <property type="entry name" value="TsaD"/>
    <property type="match status" value="1"/>
</dbReference>
<dbReference type="InterPro" id="IPR043129">
    <property type="entry name" value="ATPase_NBD"/>
</dbReference>
<dbReference type="InterPro" id="IPR000905">
    <property type="entry name" value="Gcp-like_dom"/>
</dbReference>
<dbReference type="InterPro" id="IPR017861">
    <property type="entry name" value="KAE1/TsaD"/>
</dbReference>
<dbReference type="InterPro" id="IPR017860">
    <property type="entry name" value="Peptidase_M22_CS"/>
</dbReference>
<dbReference type="InterPro" id="IPR022450">
    <property type="entry name" value="TsaD"/>
</dbReference>
<dbReference type="NCBIfam" id="TIGR00329">
    <property type="entry name" value="gcp_kae1"/>
    <property type="match status" value="1"/>
</dbReference>
<dbReference type="NCBIfam" id="TIGR03723">
    <property type="entry name" value="T6A_TsaD_YgjD"/>
    <property type="match status" value="1"/>
</dbReference>
<dbReference type="PANTHER" id="PTHR11735">
    <property type="entry name" value="TRNA N6-ADENOSINE THREONYLCARBAMOYLTRANSFERASE"/>
    <property type="match status" value="1"/>
</dbReference>
<dbReference type="PANTHER" id="PTHR11735:SF6">
    <property type="entry name" value="TRNA N6-ADENOSINE THREONYLCARBAMOYLTRANSFERASE, MITOCHONDRIAL"/>
    <property type="match status" value="1"/>
</dbReference>
<dbReference type="Pfam" id="PF00814">
    <property type="entry name" value="TsaD"/>
    <property type="match status" value="1"/>
</dbReference>
<dbReference type="PRINTS" id="PR00789">
    <property type="entry name" value="OSIALOPTASE"/>
</dbReference>
<dbReference type="SUPFAM" id="SSF53067">
    <property type="entry name" value="Actin-like ATPase domain"/>
    <property type="match status" value="1"/>
</dbReference>
<dbReference type="PROSITE" id="PS01016">
    <property type="entry name" value="GLYCOPROTEASE"/>
    <property type="match status" value="1"/>
</dbReference>